<comment type="function">
    <text evidence="1">DNA repair enzyme involved in the repair of deaminated bases. Selectively cleaves double-stranded DNA at the second phosphodiester bond 3' to a deoxyinosine leaving behind the intact lesion on the nicked DNA.</text>
</comment>
<comment type="catalytic activity">
    <reaction evidence="1">
        <text>Endonucleolytic cleavage at apurinic or apyrimidinic sites to products with a 5'-phosphate.</text>
        <dbReference type="EC" id="3.1.21.7"/>
    </reaction>
</comment>
<comment type="cofactor">
    <cofactor evidence="1">
        <name>Mg(2+)</name>
        <dbReference type="ChEBI" id="CHEBI:18420"/>
    </cofactor>
</comment>
<comment type="subcellular location">
    <subcellularLocation>
        <location evidence="1">Cytoplasm</location>
    </subcellularLocation>
</comment>
<comment type="similarity">
    <text evidence="1">Belongs to the endonuclease V family.</text>
</comment>
<reference key="1">
    <citation type="journal article" date="2002" name="Nature">
        <title>Comparison of the genomes of two Xanthomonas pathogens with differing host specificities.</title>
        <authorList>
            <person name="da Silva A.C.R."/>
            <person name="Ferro J.A."/>
            <person name="Reinach F.C."/>
            <person name="Farah C.S."/>
            <person name="Furlan L.R."/>
            <person name="Quaggio R.B."/>
            <person name="Monteiro-Vitorello C.B."/>
            <person name="Van Sluys M.A."/>
            <person name="Almeida N.F. Jr."/>
            <person name="Alves L.M.C."/>
            <person name="do Amaral A.M."/>
            <person name="Bertolini M.C."/>
            <person name="Camargo L.E.A."/>
            <person name="Camarotte G."/>
            <person name="Cannavan F."/>
            <person name="Cardozo J."/>
            <person name="Chambergo F."/>
            <person name="Ciapina L.P."/>
            <person name="Cicarelli R.M.B."/>
            <person name="Coutinho L.L."/>
            <person name="Cursino-Santos J.R."/>
            <person name="El-Dorry H."/>
            <person name="Faria J.B."/>
            <person name="Ferreira A.J.S."/>
            <person name="Ferreira R.C.C."/>
            <person name="Ferro M.I.T."/>
            <person name="Formighieri E.F."/>
            <person name="Franco M.C."/>
            <person name="Greggio C.C."/>
            <person name="Gruber A."/>
            <person name="Katsuyama A.M."/>
            <person name="Kishi L.T."/>
            <person name="Leite R.P."/>
            <person name="Lemos E.G.M."/>
            <person name="Lemos M.V.F."/>
            <person name="Locali E.C."/>
            <person name="Machado M.A."/>
            <person name="Madeira A.M.B.N."/>
            <person name="Martinez-Rossi N.M."/>
            <person name="Martins E.C."/>
            <person name="Meidanis J."/>
            <person name="Menck C.F.M."/>
            <person name="Miyaki C.Y."/>
            <person name="Moon D.H."/>
            <person name="Moreira L.M."/>
            <person name="Novo M.T.M."/>
            <person name="Okura V.K."/>
            <person name="Oliveira M.C."/>
            <person name="Oliveira V.R."/>
            <person name="Pereira H.A."/>
            <person name="Rossi A."/>
            <person name="Sena J.A.D."/>
            <person name="Silva C."/>
            <person name="de Souza R.F."/>
            <person name="Spinola L.A.F."/>
            <person name="Takita M.A."/>
            <person name="Tamura R.E."/>
            <person name="Teixeira E.C."/>
            <person name="Tezza R.I.D."/>
            <person name="Trindade dos Santos M."/>
            <person name="Truffi D."/>
            <person name="Tsai S.M."/>
            <person name="White F.F."/>
            <person name="Setubal J.C."/>
            <person name="Kitajima J.P."/>
        </authorList>
    </citation>
    <scope>NUCLEOTIDE SEQUENCE [LARGE SCALE GENOMIC DNA]</scope>
    <source>
        <strain>306</strain>
    </source>
</reference>
<dbReference type="EC" id="3.1.21.7" evidence="1"/>
<dbReference type="EMBL" id="AE008923">
    <property type="protein sequence ID" value="AAM37720.1"/>
    <property type="molecule type" value="Genomic_DNA"/>
</dbReference>
<dbReference type="RefSeq" id="WP_011051889.1">
    <property type="nucleotide sequence ID" value="NC_003919.1"/>
</dbReference>
<dbReference type="SMR" id="Q8PIM0"/>
<dbReference type="GeneID" id="66911961"/>
<dbReference type="KEGG" id="xac:XAC2875"/>
<dbReference type="eggNOG" id="COG1515">
    <property type="taxonomic scope" value="Bacteria"/>
</dbReference>
<dbReference type="HOGENOM" id="CLU_047631_1_0_6"/>
<dbReference type="Proteomes" id="UP000000576">
    <property type="component" value="Chromosome"/>
</dbReference>
<dbReference type="GO" id="GO:0005737">
    <property type="term" value="C:cytoplasm"/>
    <property type="evidence" value="ECO:0007669"/>
    <property type="project" value="UniProtKB-SubCell"/>
</dbReference>
<dbReference type="GO" id="GO:0043737">
    <property type="term" value="F:deoxyribonuclease V activity"/>
    <property type="evidence" value="ECO:0007669"/>
    <property type="project" value="UniProtKB-UniRule"/>
</dbReference>
<dbReference type="GO" id="GO:0000287">
    <property type="term" value="F:magnesium ion binding"/>
    <property type="evidence" value="ECO:0007669"/>
    <property type="project" value="UniProtKB-UniRule"/>
</dbReference>
<dbReference type="GO" id="GO:0016891">
    <property type="term" value="F:RNA endonuclease activity, producing 5'-phosphomonoesters"/>
    <property type="evidence" value="ECO:0007669"/>
    <property type="project" value="TreeGrafter"/>
</dbReference>
<dbReference type="GO" id="GO:0003727">
    <property type="term" value="F:single-stranded RNA binding"/>
    <property type="evidence" value="ECO:0007669"/>
    <property type="project" value="TreeGrafter"/>
</dbReference>
<dbReference type="GO" id="GO:0006281">
    <property type="term" value="P:DNA repair"/>
    <property type="evidence" value="ECO:0007669"/>
    <property type="project" value="UniProtKB-UniRule"/>
</dbReference>
<dbReference type="CDD" id="cd06559">
    <property type="entry name" value="Endonuclease_V"/>
    <property type="match status" value="1"/>
</dbReference>
<dbReference type="FunFam" id="3.30.2170.10:FF:000001">
    <property type="entry name" value="Endonuclease V"/>
    <property type="match status" value="1"/>
</dbReference>
<dbReference type="Gene3D" id="3.30.2170.10">
    <property type="entry name" value="archaeoglobus fulgidus dsm 4304 superfamily"/>
    <property type="match status" value="1"/>
</dbReference>
<dbReference type="HAMAP" id="MF_00801">
    <property type="entry name" value="Endonuclease_5"/>
    <property type="match status" value="1"/>
</dbReference>
<dbReference type="InterPro" id="IPR007581">
    <property type="entry name" value="Endonuclease-V"/>
</dbReference>
<dbReference type="NCBIfam" id="NF008629">
    <property type="entry name" value="PRK11617.1"/>
    <property type="match status" value="1"/>
</dbReference>
<dbReference type="PANTHER" id="PTHR28511">
    <property type="entry name" value="ENDONUCLEASE V"/>
    <property type="match status" value="1"/>
</dbReference>
<dbReference type="PANTHER" id="PTHR28511:SF1">
    <property type="entry name" value="ENDONUCLEASE V"/>
    <property type="match status" value="1"/>
</dbReference>
<dbReference type="Pfam" id="PF04493">
    <property type="entry name" value="Endonuclease_5"/>
    <property type="match status" value="1"/>
</dbReference>
<evidence type="ECO:0000255" key="1">
    <source>
        <dbReference type="HAMAP-Rule" id="MF_00801"/>
    </source>
</evidence>
<proteinExistence type="inferred from homology"/>
<name>NFI_XANAC</name>
<keyword id="KW-0963">Cytoplasm</keyword>
<keyword id="KW-0227">DNA damage</keyword>
<keyword id="KW-0234">DNA repair</keyword>
<keyword id="KW-0255">Endonuclease</keyword>
<keyword id="KW-0378">Hydrolase</keyword>
<keyword id="KW-0460">Magnesium</keyword>
<keyword id="KW-0479">Metal-binding</keyword>
<keyword id="KW-0540">Nuclease</keyword>
<protein>
    <recommendedName>
        <fullName evidence="1">Endonuclease V</fullName>
        <ecNumber evidence="1">3.1.21.7</ecNumber>
    </recommendedName>
    <alternativeName>
        <fullName evidence="1">Deoxyinosine 3'endonuclease</fullName>
    </alternativeName>
    <alternativeName>
        <fullName evidence="1">Deoxyribonuclease V</fullName>
        <shortName evidence="1">DNase V</shortName>
    </alternativeName>
</protein>
<feature type="chain" id="PRO_0000159677" description="Endonuclease V">
    <location>
        <begin position="1"/>
        <end position="237"/>
    </location>
</feature>
<feature type="binding site" evidence="1">
    <location>
        <position position="46"/>
    </location>
    <ligand>
        <name>Mg(2+)</name>
        <dbReference type="ChEBI" id="CHEBI:18420"/>
    </ligand>
</feature>
<feature type="binding site" evidence="1">
    <location>
        <position position="114"/>
    </location>
    <ligand>
        <name>Mg(2+)</name>
        <dbReference type="ChEBI" id="CHEBI:18420"/>
    </ligand>
</feature>
<feature type="site" description="Interaction with target DNA" evidence="1">
    <location>
        <position position="84"/>
    </location>
</feature>
<organism>
    <name type="scientific">Xanthomonas axonopodis pv. citri (strain 306)</name>
    <dbReference type="NCBI Taxonomy" id="190486"/>
    <lineage>
        <taxon>Bacteria</taxon>
        <taxon>Pseudomonadati</taxon>
        <taxon>Pseudomonadota</taxon>
        <taxon>Gammaproteobacteria</taxon>
        <taxon>Lysobacterales</taxon>
        <taxon>Lysobacteraceae</taxon>
        <taxon>Xanthomonas</taxon>
    </lineage>
</organism>
<sequence length="237" mass="25508">MQTNDPVFAGWDGSVIQARQLQRQLARRVVLDDAVSATPQLLAGFDVGFEDDGQTTRAAAVLLDAQTLLPLETHIARVPTSMPYVPGLLSFRELPALLQALALLSRTPDLVFIDGQGIAHPRKLGIAAHFGVVTGLPCIGIAKQRLAGSFAEPGPERGDHTPILLGGSQIGWALRSKPRCNPLIVSPGHRVSMQGALDWTLRTLRAYRLPEPTRLADRLASRRGEVTVPAGYSGHLL</sequence>
<accession>Q8PIM0</accession>
<gene>
    <name evidence="1" type="primary">nfi</name>
    <name type="ordered locus">XAC2875</name>
</gene>